<name>RSMA_NOVAD</name>
<evidence type="ECO:0000255" key="1">
    <source>
        <dbReference type="HAMAP-Rule" id="MF_00607"/>
    </source>
</evidence>
<reference key="1">
    <citation type="submission" date="2006-01" db="EMBL/GenBank/DDBJ databases">
        <title>Complete sequence of Novosphingobium aromaticivorans DSM 12444.</title>
        <authorList>
            <consortium name="US DOE Joint Genome Institute"/>
            <person name="Copeland A."/>
            <person name="Lucas S."/>
            <person name="Lapidus A."/>
            <person name="Barry K."/>
            <person name="Detter J.C."/>
            <person name="Glavina T."/>
            <person name="Hammon N."/>
            <person name="Israni S."/>
            <person name="Pitluck S."/>
            <person name="Chain P."/>
            <person name="Malfatti S."/>
            <person name="Shin M."/>
            <person name="Vergez L."/>
            <person name="Schmutz J."/>
            <person name="Larimer F."/>
            <person name="Land M."/>
            <person name="Kyrpides N."/>
            <person name="Ivanova N."/>
            <person name="Fredrickson J."/>
            <person name="Balkwill D."/>
            <person name="Romine M.F."/>
            <person name="Richardson P."/>
        </authorList>
    </citation>
    <scope>NUCLEOTIDE SEQUENCE [LARGE SCALE GENOMIC DNA]</scope>
    <source>
        <strain>ATCC 700278 / DSM 12444 / CCUG 56034 / CIP 105152 / NBRC 16084 / F199</strain>
    </source>
</reference>
<protein>
    <recommendedName>
        <fullName evidence="1">Ribosomal RNA small subunit methyltransferase A</fullName>
        <ecNumber evidence="1">2.1.1.182</ecNumber>
    </recommendedName>
    <alternativeName>
        <fullName evidence="1">16S rRNA (adenine(1518)-N(6)/adenine(1519)-N(6))-dimethyltransferase</fullName>
    </alternativeName>
    <alternativeName>
        <fullName evidence="1">16S rRNA dimethyladenosine transferase</fullName>
    </alternativeName>
    <alternativeName>
        <fullName evidence="1">16S rRNA dimethylase</fullName>
    </alternativeName>
    <alternativeName>
        <fullName evidence="1">S-adenosylmethionine-6-N', N'-adenosyl(rRNA) dimethyltransferase</fullName>
    </alternativeName>
</protein>
<comment type="function">
    <text evidence="1">Specifically dimethylates two adjacent adenosines (A1518 and A1519) in the loop of a conserved hairpin near the 3'-end of 16S rRNA in the 30S particle. May play a critical role in biogenesis of 30S subunits.</text>
</comment>
<comment type="catalytic activity">
    <reaction evidence="1">
        <text>adenosine(1518)/adenosine(1519) in 16S rRNA + 4 S-adenosyl-L-methionine = N(6)-dimethyladenosine(1518)/N(6)-dimethyladenosine(1519) in 16S rRNA + 4 S-adenosyl-L-homocysteine + 4 H(+)</text>
        <dbReference type="Rhea" id="RHEA:19609"/>
        <dbReference type="Rhea" id="RHEA-COMP:10232"/>
        <dbReference type="Rhea" id="RHEA-COMP:10233"/>
        <dbReference type="ChEBI" id="CHEBI:15378"/>
        <dbReference type="ChEBI" id="CHEBI:57856"/>
        <dbReference type="ChEBI" id="CHEBI:59789"/>
        <dbReference type="ChEBI" id="CHEBI:74411"/>
        <dbReference type="ChEBI" id="CHEBI:74493"/>
        <dbReference type="EC" id="2.1.1.182"/>
    </reaction>
</comment>
<comment type="subcellular location">
    <subcellularLocation>
        <location evidence="1">Cytoplasm</location>
    </subcellularLocation>
</comment>
<comment type="similarity">
    <text evidence="1">Belongs to the class I-like SAM-binding methyltransferase superfamily. rRNA adenine N(6)-methyltransferase family. RsmA subfamily.</text>
</comment>
<sequence length="273" mass="29810">MTDLPPLRDVVNRHGLYATKALGQNFLFDEQLLDRIARVPGKLKGENVLEVGPGPGGLTRALLRAGAKVTAIEMDKRCLPALAELADAFPGQLTVIEGDATKIAPETLFDGPWHVAANLPYNVGTQLFTGWLSGQDWPPQWKSLTLMFQLEVAERIVAQPGTDAYGRLAVLAQWRATPRIATRVHRSAFTPPPKVMSAIIHVEPAAMPEGVSARMLERVTEAAFGQRRKMLRQSLKGLPGALDALETLGIDPQRRAETLSVEDFVAIARLLTK</sequence>
<dbReference type="EC" id="2.1.1.182" evidence="1"/>
<dbReference type="EMBL" id="CP000248">
    <property type="protein sequence ID" value="ABD25331.1"/>
    <property type="molecule type" value="Genomic_DNA"/>
</dbReference>
<dbReference type="RefSeq" id="WP_011444545.1">
    <property type="nucleotide sequence ID" value="NC_007794.1"/>
</dbReference>
<dbReference type="SMR" id="Q2G9Z2"/>
<dbReference type="STRING" id="279238.Saro_0886"/>
<dbReference type="KEGG" id="nar:Saro_0886"/>
<dbReference type="eggNOG" id="COG0030">
    <property type="taxonomic scope" value="Bacteria"/>
</dbReference>
<dbReference type="HOGENOM" id="CLU_041220_0_1_5"/>
<dbReference type="Proteomes" id="UP000009134">
    <property type="component" value="Chromosome"/>
</dbReference>
<dbReference type="GO" id="GO:0005829">
    <property type="term" value="C:cytosol"/>
    <property type="evidence" value="ECO:0007669"/>
    <property type="project" value="TreeGrafter"/>
</dbReference>
<dbReference type="GO" id="GO:0052908">
    <property type="term" value="F:16S rRNA (adenine(1518)-N(6)/adenine(1519)-N(6))-dimethyltransferase activity"/>
    <property type="evidence" value="ECO:0007669"/>
    <property type="project" value="UniProtKB-EC"/>
</dbReference>
<dbReference type="GO" id="GO:0003723">
    <property type="term" value="F:RNA binding"/>
    <property type="evidence" value="ECO:0007669"/>
    <property type="project" value="UniProtKB-KW"/>
</dbReference>
<dbReference type="CDD" id="cd02440">
    <property type="entry name" value="AdoMet_MTases"/>
    <property type="match status" value="1"/>
</dbReference>
<dbReference type="FunFam" id="1.10.8.100:FF:000001">
    <property type="entry name" value="Ribosomal RNA small subunit methyltransferase A"/>
    <property type="match status" value="1"/>
</dbReference>
<dbReference type="Gene3D" id="1.10.8.100">
    <property type="entry name" value="Ribosomal RNA adenine dimethylase-like, domain 2"/>
    <property type="match status" value="1"/>
</dbReference>
<dbReference type="Gene3D" id="3.40.50.150">
    <property type="entry name" value="Vaccinia Virus protein VP39"/>
    <property type="match status" value="1"/>
</dbReference>
<dbReference type="HAMAP" id="MF_00607">
    <property type="entry name" value="16SrRNA_methyltr_A"/>
    <property type="match status" value="1"/>
</dbReference>
<dbReference type="InterPro" id="IPR001737">
    <property type="entry name" value="KsgA/Erm"/>
</dbReference>
<dbReference type="InterPro" id="IPR023165">
    <property type="entry name" value="rRNA_Ade_diMease-like_C"/>
</dbReference>
<dbReference type="InterPro" id="IPR020596">
    <property type="entry name" value="rRNA_Ade_Mease_Trfase_CS"/>
</dbReference>
<dbReference type="InterPro" id="IPR020598">
    <property type="entry name" value="rRNA_Ade_methylase_Trfase_N"/>
</dbReference>
<dbReference type="InterPro" id="IPR011530">
    <property type="entry name" value="rRNA_adenine_dimethylase"/>
</dbReference>
<dbReference type="InterPro" id="IPR029063">
    <property type="entry name" value="SAM-dependent_MTases_sf"/>
</dbReference>
<dbReference type="NCBIfam" id="TIGR00755">
    <property type="entry name" value="ksgA"/>
    <property type="match status" value="1"/>
</dbReference>
<dbReference type="PANTHER" id="PTHR11727">
    <property type="entry name" value="DIMETHYLADENOSINE TRANSFERASE"/>
    <property type="match status" value="1"/>
</dbReference>
<dbReference type="PANTHER" id="PTHR11727:SF7">
    <property type="entry name" value="DIMETHYLADENOSINE TRANSFERASE-RELATED"/>
    <property type="match status" value="1"/>
</dbReference>
<dbReference type="Pfam" id="PF00398">
    <property type="entry name" value="RrnaAD"/>
    <property type="match status" value="1"/>
</dbReference>
<dbReference type="SMART" id="SM00650">
    <property type="entry name" value="rADc"/>
    <property type="match status" value="1"/>
</dbReference>
<dbReference type="SUPFAM" id="SSF53335">
    <property type="entry name" value="S-adenosyl-L-methionine-dependent methyltransferases"/>
    <property type="match status" value="1"/>
</dbReference>
<dbReference type="PROSITE" id="PS01131">
    <property type="entry name" value="RRNA_A_DIMETH"/>
    <property type="match status" value="1"/>
</dbReference>
<dbReference type="PROSITE" id="PS51689">
    <property type="entry name" value="SAM_RNA_A_N6_MT"/>
    <property type="match status" value="1"/>
</dbReference>
<proteinExistence type="inferred from homology"/>
<gene>
    <name evidence="1" type="primary">rsmA</name>
    <name evidence="1" type="synonym">ksgA</name>
    <name type="ordered locus">Saro_0886</name>
</gene>
<keyword id="KW-0963">Cytoplasm</keyword>
<keyword id="KW-0489">Methyltransferase</keyword>
<keyword id="KW-1185">Reference proteome</keyword>
<keyword id="KW-0694">RNA-binding</keyword>
<keyword id="KW-0698">rRNA processing</keyword>
<keyword id="KW-0949">S-adenosyl-L-methionine</keyword>
<keyword id="KW-0808">Transferase</keyword>
<feature type="chain" id="PRO_0000257314" description="Ribosomal RNA small subunit methyltransferase A">
    <location>
        <begin position="1"/>
        <end position="273"/>
    </location>
</feature>
<feature type="binding site" evidence="1">
    <location>
        <position position="25"/>
    </location>
    <ligand>
        <name>S-adenosyl-L-methionine</name>
        <dbReference type="ChEBI" id="CHEBI:59789"/>
    </ligand>
</feature>
<feature type="binding site" evidence="1">
    <location>
        <position position="27"/>
    </location>
    <ligand>
        <name>S-adenosyl-L-methionine</name>
        <dbReference type="ChEBI" id="CHEBI:59789"/>
    </ligand>
</feature>
<feature type="binding site" evidence="1">
    <location>
        <position position="52"/>
    </location>
    <ligand>
        <name>S-adenosyl-L-methionine</name>
        <dbReference type="ChEBI" id="CHEBI:59789"/>
    </ligand>
</feature>
<feature type="binding site" evidence="1">
    <location>
        <position position="73"/>
    </location>
    <ligand>
        <name>S-adenosyl-L-methionine</name>
        <dbReference type="ChEBI" id="CHEBI:59789"/>
    </ligand>
</feature>
<feature type="binding site" evidence="1">
    <location>
        <position position="99"/>
    </location>
    <ligand>
        <name>S-adenosyl-L-methionine</name>
        <dbReference type="ChEBI" id="CHEBI:59789"/>
    </ligand>
</feature>
<feature type="binding site" evidence="1">
    <location>
        <position position="118"/>
    </location>
    <ligand>
        <name>S-adenosyl-L-methionine</name>
        <dbReference type="ChEBI" id="CHEBI:59789"/>
    </ligand>
</feature>
<accession>Q2G9Z2</accession>
<organism>
    <name type="scientific">Novosphingobium aromaticivorans (strain ATCC 700278 / DSM 12444 / CCUG 56034 / CIP 105152 / NBRC 16084 / F199)</name>
    <dbReference type="NCBI Taxonomy" id="279238"/>
    <lineage>
        <taxon>Bacteria</taxon>
        <taxon>Pseudomonadati</taxon>
        <taxon>Pseudomonadota</taxon>
        <taxon>Alphaproteobacteria</taxon>
        <taxon>Sphingomonadales</taxon>
        <taxon>Sphingomonadaceae</taxon>
        <taxon>Novosphingobium</taxon>
    </lineage>
</organism>